<accession>Q1B7H6</accession>
<name>TRPC_MYCSS</name>
<feature type="chain" id="PRO_1000018504" description="Indole-3-glycerol phosphate synthase">
    <location>
        <begin position="1"/>
        <end position="272"/>
    </location>
</feature>
<reference key="1">
    <citation type="submission" date="2006-06" db="EMBL/GenBank/DDBJ databases">
        <title>Complete sequence of chromosome of Mycobacterium sp. MCS.</title>
        <authorList>
            <consortium name="US DOE Joint Genome Institute"/>
            <person name="Copeland A."/>
            <person name="Lucas S."/>
            <person name="Lapidus A."/>
            <person name="Barry K."/>
            <person name="Detter J.C."/>
            <person name="Glavina del Rio T."/>
            <person name="Hammon N."/>
            <person name="Israni S."/>
            <person name="Dalin E."/>
            <person name="Tice H."/>
            <person name="Pitluck S."/>
            <person name="Martinez M."/>
            <person name="Schmutz J."/>
            <person name="Larimer F."/>
            <person name="Land M."/>
            <person name="Hauser L."/>
            <person name="Kyrpides N."/>
            <person name="Kim E."/>
            <person name="Miller C.D."/>
            <person name="Hughes J.E."/>
            <person name="Anderson A.J."/>
            <person name="Sims R.C."/>
            <person name="Richardson P."/>
        </authorList>
    </citation>
    <scope>NUCLEOTIDE SEQUENCE [LARGE SCALE GENOMIC DNA]</scope>
    <source>
        <strain>MCS</strain>
    </source>
</reference>
<proteinExistence type="inferred from homology"/>
<comment type="catalytic activity">
    <reaction evidence="1">
        <text>1-(2-carboxyphenylamino)-1-deoxy-D-ribulose 5-phosphate + H(+) = (1S,2R)-1-C-(indol-3-yl)glycerol 3-phosphate + CO2 + H2O</text>
        <dbReference type="Rhea" id="RHEA:23476"/>
        <dbReference type="ChEBI" id="CHEBI:15377"/>
        <dbReference type="ChEBI" id="CHEBI:15378"/>
        <dbReference type="ChEBI" id="CHEBI:16526"/>
        <dbReference type="ChEBI" id="CHEBI:58613"/>
        <dbReference type="ChEBI" id="CHEBI:58866"/>
        <dbReference type="EC" id="4.1.1.48"/>
    </reaction>
</comment>
<comment type="pathway">
    <text evidence="1">Amino-acid biosynthesis; L-tryptophan biosynthesis; L-tryptophan from chorismate: step 4/5.</text>
</comment>
<comment type="similarity">
    <text evidence="1">Belongs to the TrpC family.</text>
</comment>
<gene>
    <name evidence="1" type="primary">trpC</name>
    <name type="ordered locus">Mmcs_3051</name>
</gene>
<protein>
    <recommendedName>
        <fullName evidence="1">Indole-3-glycerol phosphate synthase</fullName>
        <shortName evidence="1">IGPS</shortName>
        <ecNumber evidence="1">4.1.1.48</ecNumber>
    </recommendedName>
</protein>
<organism>
    <name type="scientific">Mycobacterium sp. (strain MCS)</name>
    <dbReference type="NCBI Taxonomy" id="164756"/>
    <lineage>
        <taxon>Bacteria</taxon>
        <taxon>Bacillati</taxon>
        <taxon>Actinomycetota</taxon>
        <taxon>Actinomycetes</taxon>
        <taxon>Mycobacteriales</taxon>
        <taxon>Mycobacteriaceae</taxon>
        <taxon>Mycobacterium</taxon>
    </lineage>
</organism>
<dbReference type="EC" id="4.1.1.48" evidence="1"/>
<dbReference type="EMBL" id="CP000384">
    <property type="protein sequence ID" value="ABG09158.1"/>
    <property type="molecule type" value="Genomic_DNA"/>
</dbReference>
<dbReference type="SMR" id="Q1B7H6"/>
<dbReference type="KEGG" id="mmc:Mmcs_3051"/>
<dbReference type="HOGENOM" id="CLU_034247_0_0_11"/>
<dbReference type="BioCyc" id="MSP164756:G1G6O-3114-MONOMER"/>
<dbReference type="UniPathway" id="UPA00035">
    <property type="reaction ID" value="UER00043"/>
</dbReference>
<dbReference type="GO" id="GO:0004425">
    <property type="term" value="F:indole-3-glycerol-phosphate synthase activity"/>
    <property type="evidence" value="ECO:0007669"/>
    <property type="project" value="UniProtKB-UniRule"/>
</dbReference>
<dbReference type="GO" id="GO:0004640">
    <property type="term" value="F:phosphoribosylanthranilate isomerase activity"/>
    <property type="evidence" value="ECO:0007669"/>
    <property type="project" value="TreeGrafter"/>
</dbReference>
<dbReference type="GO" id="GO:0000162">
    <property type="term" value="P:L-tryptophan biosynthetic process"/>
    <property type="evidence" value="ECO:0007669"/>
    <property type="project" value="UniProtKB-UniRule"/>
</dbReference>
<dbReference type="CDD" id="cd00331">
    <property type="entry name" value="IGPS"/>
    <property type="match status" value="1"/>
</dbReference>
<dbReference type="FunFam" id="3.20.20.70:FF:000024">
    <property type="entry name" value="Indole-3-glycerol phosphate synthase"/>
    <property type="match status" value="1"/>
</dbReference>
<dbReference type="Gene3D" id="3.20.20.70">
    <property type="entry name" value="Aldolase class I"/>
    <property type="match status" value="1"/>
</dbReference>
<dbReference type="HAMAP" id="MF_00134_A">
    <property type="entry name" value="IGPS_A"/>
    <property type="match status" value="1"/>
</dbReference>
<dbReference type="HAMAP" id="MF_00134_B">
    <property type="entry name" value="IGPS_B"/>
    <property type="match status" value="1"/>
</dbReference>
<dbReference type="InterPro" id="IPR013785">
    <property type="entry name" value="Aldolase_TIM"/>
</dbReference>
<dbReference type="InterPro" id="IPR045186">
    <property type="entry name" value="Indole-3-glycerol_P_synth"/>
</dbReference>
<dbReference type="InterPro" id="IPR013798">
    <property type="entry name" value="Indole-3-glycerol_P_synth_dom"/>
</dbReference>
<dbReference type="InterPro" id="IPR001468">
    <property type="entry name" value="Indole-3-GlycerolPSynthase_CS"/>
</dbReference>
<dbReference type="InterPro" id="IPR011060">
    <property type="entry name" value="RibuloseP-bd_barrel"/>
</dbReference>
<dbReference type="NCBIfam" id="NF001369">
    <property type="entry name" value="PRK00278.1-1"/>
    <property type="match status" value="1"/>
</dbReference>
<dbReference type="NCBIfam" id="NF001377">
    <property type="entry name" value="PRK00278.2-4"/>
    <property type="match status" value="1"/>
</dbReference>
<dbReference type="PANTHER" id="PTHR22854:SF2">
    <property type="entry name" value="INDOLE-3-GLYCEROL-PHOSPHATE SYNTHASE"/>
    <property type="match status" value="1"/>
</dbReference>
<dbReference type="PANTHER" id="PTHR22854">
    <property type="entry name" value="TRYPTOPHAN BIOSYNTHESIS PROTEIN"/>
    <property type="match status" value="1"/>
</dbReference>
<dbReference type="Pfam" id="PF00218">
    <property type="entry name" value="IGPS"/>
    <property type="match status" value="1"/>
</dbReference>
<dbReference type="SUPFAM" id="SSF51366">
    <property type="entry name" value="Ribulose-phoshate binding barrel"/>
    <property type="match status" value="1"/>
</dbReference>
<dbReference type="PROSITE" id="PS00614">
    <property type="entry name" value="IGPS"/>
    <property type="match status" value="1"/>
</dbReference>
<sequence>MSSATVLDSIIEGVRADVAAREAVVSLTEIKERAQRAKPPLDVMAALREPGIGVIAEVKRASPSRGALAQIGDPADLARAYQDGGARVISVLTEQRRFNGSLDDLDAVRAAVSIPVLRKDFIVRPYQIHEARAHGADMLLLIVAALEQPVLESLLERTESLGMTALVEVHTEAEADRALQAGARVIGVNARNLKTLEVDRDCFARIAPGLPSNVIRIAESGVRGPADLLAYAGAGADAVLVGEGLVTSRDPRSAVADLVTAGTHPSCPKPSR</sequence>
<keyword id="KW-0028">Amino-acid biosynthesis</keyword>
<keyword id="KW-0057">Aromatic amino acid biosynthesis</keyword>
<keyword id="KW-0210">Decarboxylase</keyword>
<keyword id="KW-0456">Lyase</keyword>
<keyword id="KW-0822">Tryptophan biosynthesis</keyword>
<evidence type="ECO:0000255" key="1">
    <source>
        <dbReference type="HAMAP-Rule" id="MF_00134"/>
    </source>
</evidence>